<reference key="1">
    <citation type="submission" date="2006-08" db="EMBL/GenBank/DDBJ databases">
        <authorList>
            <consortium name="NIH - Mammalian Gene Collection (MGC) project"/>
        </authorList>
    </citation>
    <scope>NUCLEOTIDE SEQUENCE [LARGE SCALE MRNA]</scope>
    <source>
        <strain>Hereford</strain>
        <tissue>Brain cortex</tissue>
    </source>
</reference>
<organism>
    <name type="scientific">Bos taurus</name>
    <name type="common">Bovine</name>
    <dbReference type="NCBI Taxonomy" id="9913"/>
    <lineage>
        <taxon>Eukaryota</taxon>
        <taxon>Metazoa</taxon>
        <taxon>Chordata</taxon>
        <taxon>Craniata</taxon>
        <taxon>Vertebrata</taxon>
        <taxon>Euteleostomi</taxon>
        <taxon>Mammalia</taxon>
        <taxon>Eutheria</taxon>
        <taxon>Laurasiatheria</taxon>
        <taxon>Artiodactyla</taxon>
        <taxon>Ruminantia</taxon>
        <taxon>Pecora</taxon>
        <taxon>Bovidae</taxon>
        <taxon>Bovinae</taxon>
        <taxon>Bos</taxon>
    </lineage>
</organism>
<accession>Q0II22</accession>
<feature type="initiator methionine" description="Removed" evidence="2">
    <location>
        <position position="1"/>
    </location>
</feature>
<feature type="chain" id="PRO_0000285084" description="E3 ubiquitin-protein ligase RNF126">
    <location>
        <begin position="2"/>
        <end position="313"/>
    </location>
</feature>
<feature type="zinc finger region" description="C4-type" evidence="2">
    <location>
        <begin position="13"/>
        <end position="32"/>
    </location>
</feature>
<feature type="zinc finger region" description="RING-type" evidence="3">
    <location>
        <begin position="232"/>
        <end position="273"/>
    </location>
</feature>
<feature type="region of interest" description="Required for interaction with BAG6" evidence="2">
    <location>
        <begin position="5"/>
        <end position="101"/>
    </location>
</feature>
<feature type="region of interest" description="Disordered" evidence="4">
    <location>
        <begin position="42"/>
        <end position="64"/>
    </location>
</feature>
<feature type="region of interest" description="Disordered" evidence="4">
    <location>
        <begin position="96"/>
        <end position="128"/>
    </location>
</feature>
<feature type="region of interest" description="Sufficient for interaction with AICDA" evidence="2">
    <location>
        <begin position="203"/>
        <end position="306"/>
    </location>
</feature>
<feature type="region of interest" description="Disordered" evidence="4">
    <location>
        <begin position="280"/>
        <end position="313"/>
    </location>
</feature>
<feature type="compositionally biased region" description="Polar residues" evidence="4">
    <location>
        <begin position="47"/>
        <end position="64"/>
    </location>
</feature>
<feature type="compositionally biased region" description="Basic and acidic residues" evidence="4">
    <location>
        <begin position="104"/>
        <end position="117"/>
    </location>
</feature>
<feature type="compositionally biased region" description="Basic residues" evidence="4">
    <location>
        <begin position="118"/>
        <end position="128"/>
    </location>
</feature>
<feature type="compositionally biased region" description="Low complexity" evidence="4">
    <location>
        <begin position="292"/>
        <end position="313"/>
    </location>
</feature>
<feature type="binding site" evidence="2">
    <location>
        <position position="13"/>
    </location>
    <ligand>
        <name>Zn(2+)</name>
        <dbReference type="ChEBI" id="CHEBI:29105"/>
    </ligand>
</feature>
<feature type="binding site" evidence="2">
    <location>
        <position position="16"/>
    </location>
    <ligand>
        <name>Zn(2+)</name>
        <dbReference type="ChEBI" id="CHEBI:29105"/>
    </ligand>
</feature>
<feature type="binding site" evidence="2">
    <location>
        <position position="29"/>
    </location>
    <ligand>
        <name>Zn(2+)</name>
        <dbReference type="ChEBI" id="CHEBI:29105"/>
    </ligand>
</feature>
<feature type="binding site" evidence="2">
    <location>
        <position position="32"/>
    </location>
    <ligand>
        <name>Zn(2+)</name>
        <dbReference type="ChEBI" id="CHEBI:29105"/>
    </ligand>
</feature>
<feature type="modified residue" description="N-acetylalanine" evidence="2">
    <location>
        <position position="2"/>
    </location>
</feature>
<feature type="modified residue" description="Phosphoserine" evidence="2">
    <location>
        <position position="5"/>
    </location>
</feature>
<name>RN126_BOVIN</name>
<protein>
    <recommendedName>
        <fullName evidence="5">E3 ubiquitin-protein ligase RNF126</fullName>
        <ecNumber evidence="2">2.3.2.27</ecNumber>
    </recommendedName>
    <alternativeName>
        <fullName evidence="5">RING finger protein 126</fullName>
    </alternativeName>
</protein>
<evidence type="ECO:0000250" key="1">
    <source>
        <dbReference type="UniProtKB" id="Q91YL2"/>
    </source>
</evidence>
<evidence type="ECO:0000250" key="2">
    <source>
        <dbReference type="UniProtKB" id="Q9BV68"/>
    </source>
</evidence>
<evidence type="ECO:0000255" key="3">
    <source>
        <dbReference type="PROSITE-ProRule" id="PRU00175"/>
    </source>
</evidence>
<evidence type="ECO:0000256" key="4">
    <source>
        <dbReference type="SAM" id="MobiDB-lite"/>
    </source>
</evidence>
<evidence type="ECO:0000305" key="5"/>
<comment type="function">
    <text evidence="1 2">E3 ubiquitin-protein ligase that mediates ubiquitination oF target proteins. Depending on the associated E2 ligase, mediates 'Lys-27'-, 'Lys-29'-, 'Lys-48'- and/or 'Lys-63'-linked polyubiquitination of substrates. Part of a BAG6-dependent quality control process ensuring that proteins of the secretory pathway that are mislocalized to the cytosol are degraded by the proteasome. Probably acts by providing the ubiquitin ligase activity associated with the BAG6 complex and be responsible for ubiquitination of the hydrophobic mislocalized proteins and their targeting to the proteasome. May also play a role in the endosomal recycling of IGF2R, the cation-independent mannose-6-phosphate receptor. May play a role in the endosomal sorting and degradation of several membrane receptors including EGFR, FLT3, MET and CXCR4, by mediating their ubiquitination. By ubiquitinating CDKN1A/p21 and targeting it for degradation, may also promote cell proliferation. May monoubiquitinate AICDA. Acts as a regulator of DNA repair by mediating 'Lys-27'- and 'Lys-29'-linked polyubiquitination of MRE11, thereby promoting the exonuclease activity of MRE11 (By similarity).</text>
</comment>
<comment type="catalytic activity">
    <reaction evidence="2">
        <text>S-ubiquitinyl-[E2 ubiquitin-conjugating enzyme]-L-cysteine + [acceptor protein]-L-lysine = [E2 ubiquitin-conjugating enzyme]-L-cysteine + N(6)-ubiquitinyl-[acceptor protein]-L-lysine.</text>
        <dbReference type="EC" id="2.3.2.27"/>
    </reaction>
</comment>
<comment type="pathway">
    <text evidence="2">Protein modification; protein ubiquitination.</text>
</comment>
<comment type="subunit">
    <text evidence="2">Interacts with CCDC50, EGFR, FLT3 and SCAMP3. Interacts with BAG6 (via ubiquitin-like domain); required for BAG6-dependent ubiquitination of proteins mislocalized to the cytosol. Interacts with CDKN1A. Interacts with AICDA.</text>
</comment>
<comment type="subcellular location">
    <subcellularLocation>
        <location evidence="2">Cytoplasm</location>
    </subcellularLocation>
    <subcellularLocation>
        <location evidence="2">Nucleus</location>
    </subcellularLocation>
</comment>
<comment type="domain">
    <text evidence="2">The C4-type zinc finger is required for interaction with BAG6.</text>
</comment>
<comment type="PTM">
    <text evidence="2">Ubiquitinated. May undergo autoubiquitination.</text>
</comment>
<sequence length="313" mass="33954">MAEASPQPGRYFCHCCSVEIVPRLPDYICPRCESGFIEELPEETRSAENGSAPSTASADQSRQQPFENVDQPLFTLPQGYGHFAFGIFDDSFEIPTFPPGAQADDSRDPESRREREQHSRHRYGARQPRARLTARRATGRHEGVPTLEGIIQQLVNGIITPATIPNLGLGPWGVLHSNPMDYAWGANGLDAIITQLLNQFENTGPPPADKEKIQALPTVPVTEEHVGSGLECPVCKDDYGLGEHVRQLPCNHLFHDGCIVPWLEQHDSCPVCRKSLTGQNTATDPPGLAGVSFSSSSSSSSSSPGNENPASSS</sequence>
<dbReference type="EC" id="2.3.2.27" evidence="2"/>
<dbReference type="EMBL" id="BC122844">
    <property type="protein sequence ID" value="AAI22845.1"/>
    <property type="molecule type" value="mRNA"/>
</dbReference>
<dbReference type="RefSeq" id="NP_001068782.1">
    <property type="nucleotide sequence ID" value="NM_001075314.1"/>
</dbReference>
<dbReference type="SMR" id="Q0II22"/>
<dbReference type="FunCoup" id="Q0II22">
    <property type="interactions" value="2098"/>
</dbReference>
<dbReference type="STRING" id="9913.ENSBTAP00000019080"/>
<dbReference type="PaxDb" id="9913-ENSBTAP00000019080"/>
<dbReference type="Ensembl" id="ENSBTAT00000019080.5">
    <property type="protein sequence ID" value="ENSBTAP00000019080.4"/>
    <property type="gene ID" value="ENSBTAG00000014349.6"/>
</dbReference>
<dbReference type="GeneID" id="507447"/>
<dbReference type="KEGG" id="bta:507447"/>
<dbReference type="CTD" id="55658"/>
<dbReference type="VEuPathDB" id="HostDB:ENSBTAG00000014349"/>
<dbReference type="VGNC" id="VGNC:34018">
    <property type="gene designation" value="RNF126"/>
</dbReference>
<dbReference type="eggNOG" id="KOG0800">
    <property type="taxonomic scope" value="Eukaryota"/>
</dbReference>
<dbReference type="GeneTree" id="ENSGT00940000157113"/>
<dbReference type="HOGENOM" id="CLU_034892_0_0_1"/>
<dbReference type="InParanoid" id="Q0II22"/>
<dbReference type="OMA" id="DERSADN"/>
<dbReference type="OrthoDB" id="8062037at2759"/>
<dbReference type="TreeFam" id="TF317985"/>
<dbReference type="Reactome" id="R-BTA-983168">
    <property type="pathway name" value="Antigen processing: Ubiquitination &amp; Proteasome degradation"/>
</dbReference>
<dbReference type="UniPathway" id="UPA00143"/>
<dbReference type="Proteomes" id="UP000009136">
    <property type="component" value="Chromosome 7"/>
</dbReference>
<dbReference type="Bgee" id="ENSBTAG00000014349">
    <property type="expression patterns" value="Expressed in digestive system secreted substance and 105 other cell types or tissues"/>
</dbReference>
<dbReference type="GO" id="GO:0005737">
    <property type="term" value="C:cytoplasm"/>
    <property type="evidence" value="ECO:0000250"/>
    <property type="project" value="UniProtKB"/>
</dbReference>
<dbReference type="GO" id="GO:0005829">
    <property type="term" value="C:cytosol"/>
    <property type="evidence" value="ECO:0007669"/>
    <property type="project" value="GOC"/>
</dbReference>
<dbReference type="GO" id="GO:0005634">
    <property type="term" value="C:nucleus"/>
    <property type="evidence" value="ECO:0000250"/>
    <property type="project" value="UniProtKB"/>
</dbReference>
<dbReference type="GO" id="GO:0061630">
    <property type="term" value="F:ubiquitin protein ligase activity"/>
    <property type="evidence" value="ECO:0000250"/>
    <property type="project" value="UniProtKB"/>
</dbReference>
<dbReference type="GO" id="GO:0008270">
    <property type="term" value="F:zinc ion binding"/>
    <property type="evidence" value="ECO:0007669"/>
    <property type="project" value="UniProtKB-KW"/>
</dbReference>
<dbReference type="GO" id="GO:0071629">
    <property type="term" value="P:cytoplasm protein quality control by the ubiquitin-proteasome system"/>
    <property type="evidence" value="ECO:0000250"/>
    <property type="project" value="UniProtKB"/>
</dbReference>
<dbReference type="GO" id="GO:0042059">
    <property type="term" value="P:negative regulation of epidermal growth factor receptor signaling pathway"/>
    <property type="evidence" value="ECO:0000250"/>
    <property type="project" value="UniProtKB"/>
</dbReference>
<dbReference type="GO" id="GO:1905168">
    <property type="term" value="P:positive regulation of double-strand break repair via homologous recombination"/>
    <property type="evidence" value="ECO:0000250"/>
    <property type="project" value="UniProtKB"/>
</dbReference>
<dbReference type="GO" id="GO:0043161">
    <property type="term" value="P:proteasome-mediated ubiquitin-dependent protein catabolic process"/>
    <property type="evidence" value="ECO:0000250"/>
    <property type="project" value="UniProtKB"/>
</dbReference>
<dbReference type="GO" id="GO:0044314">
    <property type="term" value="P:protein K27-linked ubiquitination"/>
    <property type="evidence" value="ECO:0000250"/>
    <property type="project" value="UniProtKB"/>
</dbReference>
<dbReference type="GO" id="GO:0035519">
    <property type="term" value="P:protein K29-linked ubiquitination"/>
    <property type="evidence" value="ECO:0000250"/>
    <property type="project" value="UniProtKB"/>
</dbReference>
<dbReference type="GO" id="GO:0070936">
    <property type="term" value="P:protein K48-linked ubiquitination"/>
    <property type="evidence" value="ECO:0000250"/>
    <property type="project" value="UniProtKB"/>
</dbReference>
<dbReference type="GO" id="GO:0070534">
    <property type="term" value="P:protein K63-linked ubiquitination"/>
    <property type="evidence" value="ECO:0000250"/>
    <property type="project" value="UniProtKB"/>
</dbReference>
<dbReference type="GO" id="GO:0006513">
    <property type="term" value="P:protein monoubiquitination"/>
    <property type="evidence" value="ECO:0000250"/>
    <property type="project" value="UniProtKB"/>
</dbReference>
<dbReference type="GO" id="GO:0016567">
    <property type="term" value="P:protein ubiquitination"/>
    <property type="evidence" value="ECO:0000318"/>
    <property type="project" value="GO_Central"/>
</dbReference>
<dbReference type="GO" id="GO:0042127">
    <property type="term" value="P:regulation of cell population proliferation"/>
    <property type="evidence" value="ECO:0000250"/>
    <property type="project" value="UniProtKB"/>
</dbReference>
<dbReference type="GO" id="GO:0042147">
    <property type="term" value="P:retrograde transport, endosome to Golgi"/>
    <property type="evidence" value="ECO:0000250"/>
    <property type="project" value="UniProtKB"/>
</dbReference>
<dbReference type="GO" id="GO:0006511">
    <property type="term" value="P:ubiquitin-dependent protein catabolic process"/>
    <property type="evidence" value="ECO:0000250"/>
    <property type="project" value="UniProtKB"/>
</dbReference>
<dbReference type="GO" id="GO:0043162">
    <property type="term" value="P:ubiquitin-dependent protein catabolic process via the multivesicular body sorting pathway"/>
    <property type="evidence" value="ECO:0000250"/>
    <property type="project" value="UniProtKB"/>
</dbReference>
<dbReference type="FunFam" id="3.30.40.10:FF:000253">
    <property type="entry name" value="E3 ubiquitin-protein ligase RNF126"/>
    <property type="match status" value="1"/>
</dbReference>
<dbReference type="Gene3D" id="3.30.40.10">
    <property type="entry name" value="Zinc/RING finger domain, C3HC4 (zinc finger)"/>
    <property type="match status" value="1"/>
</dbReference>
<dbReference type="InterPro" id="IPR039525">
    <property type="entry name" value="RNF126-like_zinc-ribbon"/>
</dbReference>
<dbReference type="InterPro" id="IPR001841">
    <property type="entry name" value="Znf_RING"/>
</dbReference>
<dbReference type="InterPro" id="IPR013083">
    <property type="entry name" value="Znf_RING/FYVE/PHD"/>
</dbReference>
<dbReference type="PANTHER" id="PTHR15710">
    <property type="entry name" value="E3 UBIQUITIN-PROTEIN LIGASE PRAJA"/>
    <property type="match status" value="1"/>
</dbReference>
<dbReference type="PANTHER" id="PTHR15710:SF21">
    <property type="entry name" value="E3 UBIQUITIN-PROTEIN LIGASE RNF126"/>
    <property type="match status" value="1"/>
</dbReference>
<dbReference type="Pfam" id="PF13639">
    <property type="entry name" value="zf-RING_2"/>
    <property type="match status" value="1"/>
</dbReference>
<dbReference type="Pfam" id="PF14369">
    <property type="entry name" value="Zn_ribbon_19"/>
    <property type="match status" value="1"/>
</dbReference>
<dbReference type="SMART" id="SM00184">
    <property type="entry name" value="RING"/>
    <property type="match status" value="1"/>
</dbReference>
<dbReference type="SUPFAM" id="SSF57850">
    <property type="entry name" value="RING/U-box"/>
    <property type="match status" value="1"/>
</dbReference>
<dbReference type="PROSITE" id="PS50089">
    <property type="entry name" value="ZF_RING_2"/>
    <property type="match status" value="1"/>
</dbReference>
<gene>
    <name evidence="5" type="primary">RNF126</name>
</gene>
<proteinExistence type="evidence at transcript level"/>
<keyword id="KW-0007">Acetylation</keyword>
<keyword id="KW-0963">Cytoplasm</keyword>
<keyword id="KW-0479">Metal-binding</keyword>
<keyword id="KW-0539">Nucleus</keyword>
<keyword id="KW-0597">Phosphoprotein</keyword>
<keyword id="KW-1185">Reference proteome</keyword>
<keyword id="KW-0808">Transferase</keyword>
<keyword id="KW-0832">Ubl conjugation</keyword>
<keyword id="KW-0833">Ubl conjugation pathway</keyword>
<keyword id="KW-0862">Zinc</keyword>
<keyword id="KW-0863">Zinc-finger</keyword>